<reference key="1">
    <citation type="submission" date="2007-10" db="EMBL/GenBank/DDBJ databases">
        <title>Complete sequence of Caldivirga maquilingensis IC-167.</title>
        <authorList>
            <consortium name="US DOE Joint Genome Institute"/>
            <person name="Copeland A."/>
            <person name="Lucas S."/>
            <person name="Lapidus A."/>
            <person name="Barry K."/>
            <person name="Glavina del Rio T."/>
            <person name="Dalin E."/>
            <person name="Tice H."/>
            <person name="Pitluck S."/>
            <person name="Saunders E."/>
            <person name="Brettin T."/>
            <person name="Bruce D."/>
            <person name="Detter J.C."/>
            <person name="Han C."/>
            <person name="Schmutz J."/>
            <person name="Larimer F."/>
            <person name="Land M."/>
            <person name="Hauser L."/>
            <person name="Kyrpides N."/>
            <person name="Ivanova N."/>
            <person name="Biddle J.F."/>
            <person name="Zhang Z."/>
            <person name="Fitz-Gibbon S.T."/>
            <person name="Lowe T.M."/>
            <person name="Saltikov C."/>
            <person name="House C.H."/>
            <person name="Richardson P."/>
        </authorList>
    </citation>
    <scope>NUCLEOTIDE SEQUENCE [LARGE SCALE GENOMIC DNA]</scope>
    <source>
        <strain>ATCC 700844 / DSM 13496 / JCM 10307 / IC-167</strain>
    </source>
</reference>
<dbReference type="EC" id="4.3.3.6" evidence="1"/>
<dbReference type="EC" id="3.5.1.2" evidence="1"/>
<dbReference type="EMBL" id="CP000852">
    <property type="protein sequence ID" value="ABW02610.1"/>
    <property type="molecule type" value="Genomic_DNA"/>
</dbReference>
<dbReference type="RefSeq" id="WP_012186829.1">
    <property type="nucleotide sequence ID" value="NC_009954.1"/>
</dbReference>
<dbReference type="SMR" id="A8MAY1"/>
<dbReference type="STRING" id="397948.Cmaq_1787"/>
<dbReference type="MEROPS" id="C26.A32"/>
<dbReference type="GeneID" id="5709577"/>
<dbReference type="KEGG" id="cma:Cmaq_1787"/>
<dbReference type="eggNOG" id="arCOG00034">
    <property type="taxonomic scope" value="Archaea"/>
</dbReference>
<dbReference type="HOGENOM" id="CLU_069674_2_0_2"/>
<dbReference type="OrthoDB" id="26717at2157"/>
<dbReference type="UniPathway" id="UPA00245"/>
<dbReference type="Proteomes" id="UP000001137">
    <property type="component" value="Chromosome"/>
</dbReference>
<dbReference type="GO" id="GO:0005829">
    <property type="term" value="C:cytosol"/>
    <property type="evidence" value="ECO:0007669"/>
    <property type="project" value="TreeGrafter"/>
</dbReference>
<dbReference type="GO" id="GO:1903600">
    <property type="term" value="C:glutaminase complex"/>
    <property type="evidence" value="ECO:0007669"/>
    <property type="project" value="TreeGrafter"/>
</dbReference>
<dbReference type="GO" id="GO:0004359">
    <property type="term" value="F:glutaminase activity"/>
    <property type="evidence" value="ECO:0007669"/>
    <property type="project" value="UniProtKB-UniRule"/>
</dbReference>
<dbReference type="GO" id="GO:0036381">
    <property type="term" value="F:pyridoxal 5'-phosphate synthase (glutamine hydrolysing) activity"/>
    <property type="evidence" value="ECO:0007669"/>
    <property type="project" value="UniProtKB-UniRule"/>
</dbReference>
<dbReference type="GO" id="GO:0006543">
    <property type="term" value="P:glutamine catabolic process"/>
    <property type="evidence" value="ECO:0007669"/>
    <property type="project" value="UniProtKB-UniRule"/>
</dbReference>
<dbReference type="GO" id="GO:0042823">
    <property type="term" value="P:pyridoxal phosphate biosynthetic process"/>
    <property type="evidence" value="ECO:0007669"/>
    <property type="project" value="UniProtKB-UniRule"/>
</dbReference>
<dbReference type="GO" id="GO:0008614">
    <property type="term" value="P:pyridoxine metabolic process"/>
    <property type="evidence" value="ECO:0007669"/>
    <property type="project" value="TreeGrafter"/>
</dbReference>
<dbReference type="CDD" id="cd01749">
    <property type="entry name" value="GATase1_PB"/>
    <property type="match status" value="1"/>
</dbReference>
<dbReference type="FunFam" id="3.40.50.880:FF:000041">
    <property type="entry name" value="Glutamine amidotransferase subunit pdxT, putative"/>
    <property type="match status" value="1"/>
</dbReference>
<dbReference type="Gene3D" id="3.40.50.880">
    <property type="match status" value="1"/>
</dbReference>
<dbReference type="HAMAP" id="MF_01615">
    <property type="entry name" value="PdxT"/>
    <property type="match status" value="1"/>
</dbReference>
<dbReference type="InterPro" id="IPR029062">
    <property type="entry name" value="Class_I_gatase-like"/>
</dbReference>
<dbReference type="InterPro" id="IPR002161">
    <property type="entry name" value="PdxT/SNO"/>
</dbReference>
<dbReference type="InterPro" id="IPR021196">
    <property type="entry name" value="PdxT/SNO_CS"/>
</dbReference>
<dbReference type="NCBIfam" id="TIGR03800">
    <property type="entry name" value="PLP_synth_Pdx2"/>
    <property type="match status" value="1"/>
</dbReference>
<dbReference type="PANTHER" id="PTHR31559">
    <property type="entry name" value="PYRIDOXAL 5'-PHOSPHATE SYNTHASE SUBUNIT SNO"/>
    <property type="match status" value="1"/>
</dbReference>
<dbReference type="PANTHER" id="PTHR31559:SF0">
    <property type="entry name" value="PYRIDOXAL 5'-PHOSPHATE SYNTHASE SUBUNIT SNO1-RELATED"/>
    <property type="match status" value="1"/>
</dbReference>
<dbReference type="Pfam" id="PF01174">
    <property type="entry name" value="SNO"/>
    <property type="match status" value="1"/>
</dbReference>
<dbReference type="PIRSF" id="PIRSF005639">
    <property type="entry name" value="Glut_amidoT_SNO"/>
    <property type="match status" value="1"/>
</dbReference>
<dbReference type="SUPFAM" id="SSF52317">
    <property type="entry name" value="Class I glutamine amidotransferase-like"/>
    <property type="match status" value="1"/>
</dbReference>
<dbReference type="PROSITE" id="PS01236">
    <property type="entry name" value="PDXT_SNO_1"/>
    <property type="match status" value="1"/>
</dbReference>
<dbReference type="PROSITE" id="PS51130">
    <property type="entry name" value="PDXT_SNO_2"/>
    <property type="match status" value="1"/>
</dbReference>
<gene>
    <name evidence="1" type="primary">pdxT</name>
    <name type="ordered locus">Cmaq_1787</name>
</gene>
<feature type="chain" id="PRO_1000088045" description="Pyridoxal 5'-phosphate synthase subunit PdxT">
    <location>
        <begin position="1"/>
        <end position="198"/>
    </location>
</feature>
<feature type="active site" description="Nucleophile" evidence="1">
    <location>
        <position position="84"/>
    </location>
</feature>
<feature type="active site" description="Charge relay system" evidence="1">
    <location>
        <position position="179"/>
    </location>
</feature>
<feature type="active site" description="Charge relay system" evidence="1">
    <location>
        <position position="181"/>
    </location>
</feature>
<feature type="binding site" evidence="1">
    <location>
        <begin position="52"/>
        <end position="54"/>
    </location>
    <ligand>
        <name>L-glutamine</name>
        <dbReference type="ChEBI" id="CHEBI:58359"/>
    </ligand>
</feature>
<feature type="binding site" evidence="1">
    <location>
        <position position="116"/>
    </location>
    <ligand>
        <name>L-glutamine</name>
        <dbReference type="ChEBI" id="CHEBI:58359"/>
    </ligand>
</feature>
<feature type="binding site" evidence="1">
    <location>
        <begin position="143"/>
        <end position="144"/>
    </location>
    <ligand>
        <name>L-glutamine</name>
        <dbReference type="ChEBI" id="CHEBI:58359"/>
    </ligand>
</feature>
<comment type="function">
    <text evidence="1">Catalyzes the hydrolysis of glutamine to glutamate and ammonia as part of the biosynthesis of pyridoxal 5'-phosphate. The resulting ammonia molecule is channeled to the active site of PdxS.</text>
</comment>
<comment type="catalytic activity">
    <reaction evidence="1">
        <text>aldehydo-D-ribose 5-phosphate + D-glyceraldehyde 3-phosphate + L-glutamine = pyridoxal 5'-phosphate + L-glutamate + phosphate + 3 H2O + H(+)</text>
        <dbReference type="Rhea" id="RHEA:31507"/>
        <dbReference type="ChEBI" id="CHEBI:15377"/>
        <dbReference type="ChEBI" id="CHEBI:15378"/>
        <dbReference type="ChEBI" id="CHEBI:29985"/>
        <dbReference type="ChEBI" id="CHEBI:43474"/>
        <dbReference type="ChEBI" id="CHEBI:58273"/>
        <dbReference type="ChEBI" id="CHEBI:58359"/>
        <dbReference type="ChEBI" id="CHEBI:59776"/>
        <dbReference type="ChEBI" id="CHEBI:597326"/>
        <dbReference type="EC" id="4.3.3.6"/>
    </reaction>
</comment>
<comment type="catalytic activity">
    <reaction evidence="1">
        <text>L-glutamine + H2O = L-glutamate + NH4(+)</text>
        <dbReference type="Rhea" id="RHEA:15889"/>
        <dbReference type="ChEBI" id="CHEBI:15377"/>
        <dbReference type="ChEBI" id="CHEBI:28938"/>
        <dbReference type="ChEBI" id="CHEBI:29985"/>
        <dbReference type="ChEBI" id="CHEBI:58359"/>
        <dbReference type="EC" id="3.5.1.2"/>
    </reaction>
</comment>
<comment type="pathway">
    <text evidence="1">Cofactor biosynthesis; pyridoxal 5'-phosphate biosynthesis.</text>
</comment>
<comment type="subunit">
    <text evidence="1">In the presence of PdxS, forms a dodecamer of heterodimers. Only shows activity in the heterodimer.</text>
</comment>
<comment type="similarity">
    <text evidence="1">Belongs to the glutaminase PdxT/SNO family.</text>
</comment>
<accession>A8MAY1</accession>
<sequence length="198" mass="21753">MKIGILAVQGDVEEHEYAVKKAMDELGISGDVARVKRIDDLRGLSGIIIPGGESTSIWRLTSKSNLMNALRDEVSNGLPAMGTCAGAIFMAREVKDRIMGETGQGVLGIMNISVVRNFYGRQRESFETTLNIEGIGTVRAVFIRAPAIVKYWGSAKPLVAYGDNYPVVIENNMLALTFHPELTTILVHEWFISNLVKK</sequence>
<organism>
    <name type="scientific">Caldivirga maquilingensis (strain ATCC 700844 / DSM 13496 / JCM 10307 / IC-167)</name>
    <dbReference type="NCBI Taxonomy" id="397948"/>
    <lineage>
        <taxon>Archaea</taxon>
        <taxon>Thermoproteota</taxon>
        <taxon>Thermoprotei</taxon>
        <taxon>Thermoproteales</taxon>
        <taxon>Thermoproteaceae</taxon>
        <taxon>Caldivirga</taxon>
    </lineage>
</organism>
<name>PDXT_CALMQ</name>
<proteinExistence type="inferred from homology"/>
<evidence type="ECO:0000255" key="1">
    <source>
        <dbReference type="HAMAP-Rule" id="MF_01615"/>
    </source>
</evidence>
<protein>
    <recommendedName>
        <fullName evidence="1">Pyridoxal 5'-phosphate synthase subunit PdxT</fullName>
        <ecNumber evidence="1">4.3.3.6</ecNumber>
    </recommendedName>
    <alternativeName>
        <fullName evidence="1">Pdx2</fullName>
    </alternativeName>
    <alternativeName>
        <fullName evidence="1">Pyridoxal 5'-phosphate synthase glutaminase subunit</fullName>
        <ecNumber evidence="1">3.5.1.2</ecNumber>
    </alternativeName>
</protein>
<keyword id="KW-0315">Glutamine amidotransferase</keyword>
<keyword id="KW-0378">Hydrolase</keyword>
<keyword id="KW-0456">Lyase</keyword>
<keyword id="KW-0663">Pyridoxal phosphate</keyword>
<keyword id="KW-1185">Reference proteome</keyword>